<name>RCSB_ECO57</name>
<sequence length="216" mass="23671">MNNMNVIIADDHPIVLFGIRKSLEQIEWVNVVGEFEDSTALINNLPKLDAHVLITDLSMPGDKYGDGITLIKYIKRHFPSLSIIVLTMNNNPAILSAVLDLDIEGIVLKQGAPTDLPKALAALQKGKKFTPESVSRLLEKISAGGYGDKRLSPKESEVLRLFAEGFLVTEIAKKLNRSIKTISSQKKSAMMKLGVENDIALLNYLSSVTLSPADKD</sequence>
<accession>P69409</accession>
<accession>P14374</accession>
<evidence type="ECO:0000255" key="1">
    <source>
        <dbReference type="HAMAP-Rule" id="MF_00981"/>
    </source>
</evidence>
<evidence type="ECO:0000255" key="2">
    <source>
        <dbReference type="PROSITE-ProRule" id="PRU00169"/>
    </source>
</evidence>
<organism>
    <name type="scientific">Escherichia coli O157:H7</name>
    <dbReference type="NCBI Taxonomy" id="83334"/>
    <lineage>
        <taxon>Bacteria</taxon>
        <taxon>Pseudomonadati</taxon>
        <taxon>Pseudomonadota</taxon>
        <taxon>Gammaproteobacteria</taxon>
        <taxon>Enterobacterales</taxon>
        <taxon>Enterobacteriaceae</taxon>
        <taxon>Escherichia</taxon>
    </lineage>
</organism>
<feature type="chain" id="PRO_0000081211" description="Transcriptional regulatory protein RcsB">
    <location>
        <begin position="1"/>
        <end position="216"/>
    </location>
</feature>
<feature type="domain" description="Response regulatory" evidence="2">
    <location>
        <begin position="5"/>
        <end position="124"/>
    </location>
</feature>
<feature type="domain" description="HTH luxR-type" evidence="1">
    <location>
        <begin position="144"/>
        <end position="209"/>
    </location>
</feature>
<feature type="DNA-binding region" description="H-T-H motif" evidence="1">
    <location>
        <begin position="168"/>
        <end position="187"/>
    </location>
</feature>
<feature type="modified residue" description="4-aspartylphosphate" evidence="1">
    <location>
        <position position="56"/>
    </location>
</feature>
<reference key="1">
    <citation type="journal article" date="2001" name="Nature">
        <title>Genome sequence of enterohaemorrhagic Escherichia coli O157:H7.</title>
        <authorList>
            <person name="Perna N.T."/>
            <person name="Plunkett G. III"/>
            <person name="Burland V."/>
            <person name="Mau B."/>
            <person name="Glasner J.D."/>
            <person name="Rose D.J."/>
            <person name="Mayhew G.F."/>
            <person name="Evans P.S."/>
            <person name="Gregor J."/>
            <person name="Kirkpatrick H.A."/>
            <person name="Posfai G."/>
            <person name="Hackett J."/>
            <person name="Klink S."/>
            <person name="Boutin A."/>
            <person name="Shao Y."/>
            <person name="Miller L."/>
            <person name="Grotbeck E.J."/>
            <person name="Davis N.W."/>
            <person name="Lim A."/>
            <person name="Dimalanta E.T."/>
            <person name="Potamousis K."/>
            <person name="Apodaca J."/>
            <person name="Anantharaman T.S."/>
            <person name="Lin J."/>
            <person name="Yen G."/>
            <person name="Schwartz D.C."/>
            <person name="Welch R.A."/>
            <person name="Blattner F.R."/>
        </authorList>
    </citation>
    <scope>NUCLEOTIDE SEQUENCE [LARGE SCALE GENOMIC DNA]</scope>
    <source>
        <strain>O157:H7 / EDL933 / ATCC 700927 / EHEC</strain>
    </source>
</reference>
<reference key="2">
    <citation type="journal article" date="2001" name="DNA Res.">
        <title>Complete genome sequence of enterohemorrhagic Escherichia coli O157:H7 and genomic comparison with a laboratory strain K-12.</title>
        <authorList>
            <person name="Hayashi T."/>
            <person name="Makino K."/>
            <person name="Ohnishi M."/>
            <person name="Kurokawa K."/>
            <person name="Ishii K."/>
            <person name="Yokoyama K."/>
            <person name="Han C.-G."/>
            <person name="Ohtsubo E."/>
            <person name="Nakayama K."/>
            <person name="Murata T."/>
            <person name="Tanaka M."/>
            <person name="Tobe T."/>
            <person name="Iida T."/>
            <person name="Takami H."/>
            <person name="Honda T."/>
            <person name="Sasakawa C."/>
            <person name="Ogasawara N."/>
            <person name="Yasunaga T."/>
            <person name="Kuhara S."/>
            <person name="Shiba T."/>
            <person name="Hattori M."/>
            <person name="Shinagawa H."/>
        </authorList>
    </citation>
    <scope>NUCLEOTIDE SEQUENCE [LARGE SCALE GENOMIC DNA]</scope>
    <source>
        <strain>O157:H7 / Sakai / RIMD 0509952 / EHEC</strain>
    </source>
</reference>
<dbReference type="EMBL" id="AE005174">
    <property type="protein sequence ID" value="AAG57352.1"/>
    <property type="molecule type" value="Genomic_DNA"/>
</dbReference>
<dbReference type="EMBL" id="BA000007">
    <property type="protein sequence ID" value="BAB36529.1"/>
    <property type="molecule type" value="Genomic_DNA"/>
</dbReference>
<dbReference type="PIR" id="B91017">
    <property type="entry name" value="B91017"/>
</dbReference>
<dbReference type="RefSeq" id="NP_311133.1">
    <property type="nucleotide sequence ID" value="NC_002695.1"/>
</dbReference>
<dbReference type="RefSeq" id="WP_001061917.1">
    <property type="nucleotide sequence ID" value="NZ_VOAI01000001.1"/>
</dbReference>
<dbReference type="SMR" id="P69409"/>
<dbReference type="STRING" id="155864.Z3476"/>
<dbReference type="GeneID" id="916814"/>
<dbReference type="GeneID" id="93774960"/>
<dbReference type="KEGG" id="ece:Z3476"/>
<dbReference type="KEGG" id="ecs:ECs_3106"/>
<dbReference type="PATRIC" id="fig|386585.9.peg.3240"/>
<dbReference type="eggNOG" id="COG2197">
    <property type="taxonomic scope" value="Bacteria"/>
</dbReference>
<dbReference type="HOGENOM" id="CLU_000445_90_1_6"/>
<dbReference type="OMA" id="IEWVNIV"/>
<dbReference type="Proteomes" id="UP000000558">
    <property type="component" value="Chromosome"/>
</dbReference>
<dbReference type="Proteomes" id="UP000002519">
    <property type="component" value="Chromosome"/>
</dbReference>
<dbReference type="GO" id="GO:0003677">
    <property type="term" value="F:DNA binding"/>
    <property type="evidence" value="ECO:0007669"/>
    <property type="project" value="UniProtKB-UniRule"/>
</dbReference>
<dbReference type="GO" id="GO:0000160">
    <property type="term" value="P:phosphorelay signal transduction system"/>
    <property type="evidence" value="ECO:0007669"/>
    <property type="project" value="UniProtKB-UniRule"/>
</dbReference>
<dbReference type="GO" id="GO:0006355">
    <property type="term" value="P:regulation of DNA-templated transcription"/>
    <property type="evidence" value="ECO:0007669"/>
    <property type="project" value="UniProtKB-UniRule"/>
</dbReference>
<dbReference type="CDD" id="cd06170">
    <property type="entry name" value="LuxR_C_like"/>
    <property type="match status" value="1"/>
</dbReference>
<dbReference type="CDD" id="cd17535">
    <property type="entry name" value="REC_NarL-like"/>
    <property type="match status" value="1"/>
</dbReference>
<dbReference type="FunFam" id="1.10.10.10:FF:000072">
    <property type="entry name" value="Transcriptional regulatory protein RcsB"/>
    <property type="match status" value="1"/>
</dbReference>
<dbReference type="FunFam" id="3.40.50.2300:FF:000023">
    <property type="entry name" value="Transcriptional regulatory protein RcsB"/>
    <property type="match status" value="1"/>
</dbReference>
<dbReference type="Gene3D" id="3.40.50.2300">
    <property type="match status" value="1"/>
</dbReference>
<dbReference type="Gene3D" id="1.10.10.10">
    <property type="entry name" value="Winged helix-like DNA-binding domain superfamily/Winged helix DNA-binding domain"/>
    <property type="match status" value="1"/>
</dbReference>
<dbReference type="HAMAP" id="MF_00981">
    <property type="entry name" value="RcsB"/>
    <property type="match status" value="1"/>
</dbReference>
<dbReference type="InterPro" id="IPR011006">
    <property type="entry name" value="CheY-like_superfamily"/>
</dbReference>
<dbReference type="InterPro" id="IPR030864">
    <property type="entry name" value="RcsB"/>
</dbReference>
<dbReference type="InterPro" id="IPR016032">
    <property type="entry name" value="Sig_transdc_resp-reg_C-effctor"/>
</dbReference>
<dbReference type="InterPro" id="IPR001789">
    <property type="entry name" value="Sig_transdc_resp-reg_receiver"/>
</dbReference>
<dbReference type="InterPro" id="IPR000792">
    <property type="entry name" value="Tscrpt_reg_LuxR_C"/>
</dbReference>
<dbReference type="InterPro" id="IPR039420">
    <property type="entry name" value="WalR-like"/>
</dbReference>
<dbReference type="InterPro" id="IPR036388">
    <property type="entry name" value="WH-like_DNA-bd_sf"/>
</dbReference>
<dbReference type="NCBIfam" id="NF008098">
    <property type="entry name" value="PRK10840.1"/>
    <property type="match status" value="1"/>
</dbReference>
<dbReference type="PANTHER" id="PTHR43214:SF17">
    <property type="entry name" value="TRANSCRIPTIONAL REGULATORY PROTEIN RCSB"/>
    <property type="match status" value="1"/>
</dbReference>
<dbReference type="PANTHER" id="PTHR43214">
    <property type="entry name" value="TWO-COMPONENT RESPONSE REGULATOR"/>
    <property type="match status" value="1"/>
</dbReference>
<dbReference type="Pfam" id="PF00196">
    <property type="entry name" value="GerE"/>
    <property type="match status" value="1"/>
</dbReference>
<dbReference type="Pfam" id="PF00072">
    <property type="entry name" value="Response_reg"/>
    <property type="match status" value="1"/>
</dbReference>
<dbReference type="PRINTS" id="PR00038">
    <property type="entry name" value="HTHLUXR"/>
</dbReference>
<dbReference type="SMART" id="SM00421">
    <property type="entry name" value="HTH_LUXR"/>
    <property type="match status" value="1"/>
</dbReference>
<dbReference type="SMART" id="SM00448">
    <property type="entry name" value="REC"/>
    <property type="match status" value="1"/>
</dbReference>
<dbReference type="SUPFAM" id="SSF46894">
    <property type="entry name" value="C-terminal effector domain of the bipartite response regulators"/>
    <property type="match status" value="1"/>
</dbReference>
<dbReference type="SUPFAM" id="SSF52172">
    <property type="entry name" value="CheY-like"/>
    <property type="match status" value="1"/>
</dbReference>
<dbReference type="PROSITE" id="PS00622">
    <property type="entry name" value="HTH_LUXR_1"/>
    <property type="match status" value="1"/>
</dbReference>
<dbReference type="PROSITE" id="PS50043">
    <property type="entry name" value="HTH_LUXR_2"/>
    <property type="match status" value="1"/>
</dbReference>
<dbReference type="PROSITE" id="PS50110">
    <property type="entry name" value="RESPONSE_REGULATORY"/>
    <property type="match status" value="1"/>
</dbReference>
<protein>
    <recommendedName>
        <fullName evidence="1">Transcriptional regulatory protein RcsB</fullName>
    </recommendedName>
</protein>
<gene>
    <name evidence="1" type="primary">rcsB</name>
    <name type="ordered locus">Z3476</name>
    <name type="ordered locus">ECs3106</name>
</gene>
<comment type="function">
    <text evidence="1">Component of the Rcs signaling system, which controls transcription of numerous genes. RcsB is the response regulator that binds to regulatory DNA regions. Can function both in an RcsA-dependent or RcsA-independent manner.</text>
</comment>
<comment type="subunit">
    <text evidence="1">Interacts with RcsD and RcsA.</text>
</comment>
<comment type="PTM">
    <text evidence="1">Phosphorylated and activated by RcsD.</text>
</comment>
<comment type="similarity">
    <text evidence="1">Belongs to the RcsB family.</text>
</comment>
<keyword id="KW-0238">DNA-binding</keyword>
<keyword id="KW-0597">Phosphoprotein</keyword>
<keyword id="KW-1185">Reference proteome</keyword>
<keyword id="KW-0804">Transcription</keyword>
<keyword id="KW-0805">Transcription regulation</keyword>
<keyword id="KW-0902">Two-component regulatory system</keyword>
<proteinExistence type="inferred from homology"/>